<dbReference type="EC" id="7.3.2.1" evidence="1"/>
<dbReference type="EMBL" id="BX950851">
    <property type="protein sequence ID" value="CAG76059.1"/>
    <property type="molecule type" value="Genomic_DNA"/>
</dbReference>
<dbReference type="SMR" id="Q6D2D5"/>
<dbReference type="STRING" id="218491.ECA3161"/>
<dbReference type="KEGG" id="eca:ECA3161"/>
<dbReference type="PATRIC" id="fig|218491.5.peg.3198"/>
<dbReference type="eggNOG" id="COG1117">
    <property type="taxonomic scope" value="Bacteria"/>
</dbReference>
<dbReference type="HOGENOM" id="CLU_000604_1_22_6"/>
<dbReference type="OrthoDB" id="9802264at2"/>
<dbReference type="Proteomes" id="UP000007966">
    <property type="component" value="Chromosome"/>
</dbReference>
<dbReference type="GO" id="GO:0005886">
    <property type="term" value="C:plasma membrane"/>
    <property type="evidence" value="ECO:0007669"/>
    <property type="project" value="UniProtKB-SubCell"/>
</dbReference>
<dbReference type="GO" id="GO:0005524">
    <property type="term" value="F:ATP binding"/>
    <property type="evidence" value="ECO:0007669"/>
    <property type="project" value="UniProtKB-KW"/>
</dbReference>
<dbReference type="GO" id="GO:0016887">
    <property type="term" value="F:ATP hydrolysis activity"/>
    <property type="evidence" value="ECO:0007669"/>
    <property type="project" value="InterPro"/>
</dbReference>
<dbReference type="GO" id="GO:0015415">
    <property type="term" value="F:ATPase-coupled phosphate ion transmembrane transporter activity"/>
    <property type="evidence" value="ECO:0007669"/>
    <property type="project" value="UniProtKB-EC"/>
</dbReference>
<dbReference type="GO" id="GO:0035435">
    <property type="term" value="P:phosphate ion transmembrane transport"/>
    <property type="evidence" value="ECO:0007669"/>
    <property type="project" value="InterPro"/>
</dbReference>
<dbReference type="CDD" id="cd03260">
    <property type="entry name" value="ABC_PstB_phosphate_transporter"/>
    <property type="match status" value="1"/>
</dbReference>
<dbReference type="FunFam" id="3.40.50.300:FF:000132">
    <property type="entry name" value="Phosphate import ATP-binding protein PstB"/>
    <property type="match status" value="1"/>
</dbReference>
<dbReference type="Gene3D" id="3.40.50.300">
    <property type="entry name" value="P-loop containing nucleotide triphosphate hydrolases"/>
    <property type="match status" value="1"/>
</dbReference>
<dbReference type="InterPro" id="IPR003593">
    <property type="entry name" value="AAA+_ATPase"/>
</dbReference>
<dbReference type="InterPro" id="IPR003439">
    <property type="entry name" value="ABC_transporter-like_ATP-bd"/>
</dbReference>
<dbReference type="InterPro" id="IPR017871">
    <property type="entry name" value="ABC_transporter-like_CS"/>
</dbReference>
<dbReference type="InterPro" id="IPR027417">
    <property type="entry name" value="P-loop_NTPase"/>
</dbReference>
<dbReference type="InterPro" id="IPR005670">
    <property type="entry name" value="PstB-like"/>
</dbReference>
<dbReference type="NCBIfam" id="TIGR00972">
    <property type="entry name" value="3a0107s01c2"/>
    <property type="match status" value="1"/>
</dbReference>
<dbReference type="PANTHER" id="PTHR43423">
    <property type="entry name" value="ABC TRANSPORTER I FAMILY MEMBER 17"/>
    <property type="match status" value="1"/>
</dbReference>
<dbReference type="PANTHER" id="PTHR43423:SF12">
    <property type="entry name" value="IRON EXPORT ATP-BINDING PROTEIN FETA-RELATED"/>
    <property type="match status" value="1"/>
</dbReference>
<dbReference type="Pfam" id="PF00005">
    <property type="entry name" value="ABC_tran"/>
    <property type="match status" value="1"/>
</dbReference>
<dbReference type="SMART" id="SM00382">
    <property type="entry name" value="AAA"/>
    <property type="match status" value="1"/>
</dbReference>
<dbReference type="SUPFAM" id="SSF52540">
    <property type="entry name" value="P-loop containing nucleoside triphosphate hydrolases"/>
    <property type="match status" value="1"/>
</dbReference>
<dbReference type="PROSITE" id="PS00211">
    <property type="entry name" value="ABC_TRANSPORTER_1"/>
    <property type="match status" value="1"/>
</dbReference>
<dbReference type="PROSITE" id="PS50893">
    <property type="entry name" value="ABC_TRANSPORTER_2"/>
    <property type="match status" value="1"/>
</dbReference>
<dbReference type="PROSITE" id="PS51238">
    <property type="entry name" value="PSTB"/>
    <property type="match status" value="1"/>
</dbReference>
<name>PSTB1_PECAS</name>
<reference key="1">
    <citation type="journal article" date="2004" name="Proc. Natl. Acad. Sci. U.S.A.">
        <title>Genome sequence of the enterobacterial phytopathogen Erwinia carotovora subsp. atroseptica and characterization of virulence factors.</title>
        <authorList>
            <person name="Bell K.S."/>
            <person name="Sebaihia M."/>
            <person name="Pritchard L."/>
            <person name="Holden M.T.G."/>
            <person name="Hyman L.J."/>
            <person name="Holeva M.C."/>
            <person name="Thomson N.R."/>
            <person name="Bentley S.D."/>
            <person name="Churcher L.J.C."/>
            <person name="Mungall K."/>
            <person name="Atkin R."/>
            <person name="Bason N."/>
            <person name="Brooks K."/>
            <person name="Chillingworth T."/>
            <person name="Clark K."/>
            <person name="Doggett J."/>
            <person name="Fraser A."/>
            <person name="Hance Z."/>
            <person name="Hauser H."/>
            <person name="Jagels K."/>
            <person name="Moule S."/>
            <person name="Norbertczak H."/>
            <person name="Ormond D."/>
            <person name="Price C."/>
            <person name="Quail M.A."/>
            <person name="Sanders M."/>
            <person name="Walker D."/>
            <person name="Whitehead S."/>
            <person name="Salmond G.P.C."/>
            <person name="Birch P.R.J."/>
            <person name="Parkhill J."/>
            <person name="Toth I.K."/>
        </authorList>
    </citation>
    <scope>NUCLEOTIDE SEQUENCE [LARGE SCALE GENOMIC DNA]</scope>
    <source>
        <strain>SCRI 1043 / ATCC BAA-672</strain>
    </source>
</reference>
<comment type="function">
    <text evidence="1">Part of the ABC transporter complex PstSACB involved in phosphate import. Responsible for energy coupling to the transport system.</text>
</comment>
<comment type="catalytic activity">
    <reaction evidence="1">
        <text>phosphate(out) + ATP + H2O = ADP + 2 phosphate(in) + H(+)</text>
        <dbReference type="Rhea" id="RHEA:24440"/>
        <dbReference type="ChEBI" id="CHEBI:15377"/>
        <dbReference type="ChEBI" id="CHEBI:15378"/>
        <dbReference type="ChEBI" id="CHEBI:30616"/>
        <dbReference type="ChEBI" id="CHEBI:43474"/>
        <dbReference type="ChEBI" id="CHEBI:456216"/>
        <dbReference type="EC" id="7.3.2.1"/>
    </reaction>
</comment>
<comment type="subunit">
    <text evidence="1">The complex is composed of two ATP-binding proteins (PstB), two transmembrane proteins (PstC and PstA) and a solute-binding protein (PstS).</text>
</comment>
<comment type="subcellular location">
    <subcellularLocation>
        <location evidence="1">Cell inner membrane</location>
        <topology evidence="1">Peripheral membrane protein</topology>
    </subcellularLocation>
</comment>
<comment type="similarity">
    <text evidence="1">Belongs to the ABC transporter superfamily. Phosphate importer (TC 3.A.1.7) family.</text>
</comment>
<gene>
    <name evidence="1" type="primary">pstB1</name>
    <name type="ordered locus">ECA3161</name>
</gene>
<feature type="chain" id="PRO_0000092817" description="Phosphate import ATP-binding protein PstB 1">
    <location>
        <begin position="1"/>
        <end position="271"/>
    </location>
</feature>
<feature type="domain" description="ABC transporter" evidence="1">
    <location>
        <begin position="25"/>
        <end position="266"/>
    </location>
</feature>
<feature type="binding site" evidence="1">
    <location>
        <begin position="57"/>
        <end position="64"/>
    </location>
    <ligand>
        <name>ATP</name>
        <dbReference type="ChEBI" id="CHEBI:30616"/>
    </ligand>
</feature>
<keyword id="KW-0067">ATP-binding</keyword>
<keyword id="KW-0997">Cell inner membrane</keyword>
<keyword id="KW-1003">Cell membrane</keyword>
<keyword id="KW-0472">Membrane</keyword>
<keyword id="KW-0547">Nucleotide-binding</keyword>
<keyword id="KW-0592">Phosphate transport</keyword>
<keyword id="KW-1185">Reference proteome</keyword>
<keyword id="KW-1278">Translocase</keyword>
<keyword id="KW-0813">Transport</keyword>
<protein>
    <recommendedName>
        <fullName evidence="1">Phosphate import ATP-binding protein PstB 1</fullName>
        <ecNumber evidence="1">7.3.2.1</ecNumber>
    </recommendedName>
    <alternativeName>
        <fullName evidence="1">ABC phosphate transporter 1</fullName>
    </alternativeName>
    <alternativeName>
        <fullName evidence="1">Phosphate-transporting ATPase 1</fullName>
    </alternativeName>
</protein>
<accession>Q6D2D5</accession>
<evidence type="ECO:0000255" key="1">
    <source>
        <dbReference type="HAMAP-Rule" id="MF_01702"/>
    </source>
</evidence>
<sequence length="271" mass="30706">MGFMTQKEMAPLPDVHQLSDEQTTLTVEHLNLYYGNKQALNDISIRIPKNQVTALIGPSGCGKSTLLRCFNRMNDLVDDCRTEGDIRLNGMPINDPQLDVAVLRRRIGMVFQRPNPFPKSIYENVIYGLRLQGLRDRRLLDDAVERALRAAALWHEVKDRLSDNALTLSSGQQQRLVIARAIAIEPEVLLLDEPTSALDPISTLIVEELMGTLKQHFTLVLVTHNMQQAARVSDYTAFINQGKLIEYNRTDDLFTSPTQRRTEDYITGRFG</sequence>
<proteinExistence type="inferred from homology"/>
<organism>
    <name type="scientific">Pectobacterium atrosepticum (strain SCRI 1043 / ATCC BAA-672)</name>
    <name type="common">Erwinia carotovora subsp. atroseptica</name>
    <dbReference type="NCBI Taxonomy" id="218491"/>
    <lineage>
        <taxon>Bacteria</taxon>
        <taxon>Pseudomonadati</taxon>
        <taxon>Pseudomonadota</taxon>
        <taxon>Gammaproteobacteria</taxon>
        <taxon>Enterobacterales</taxon>
        <taxon>Pectobacteriaceae</taxon>
        <taxon>Pectobacterium</taxon>
    </lineage>
</organism>